<gene>
    <name type="ordered locus">SPG_1010</name>
</gene>
<proteinExistence type="inferred from homology"/>
<dbReference type="EMBL" id="CP001015">
    <property type="protein sequence ID" value="ACF55614.1"/>
    <property type="molecule type" value="Genomic_DNA"/>
</dbReference>
<dbReference type="SMR" id="B5E4K3"/>
<dbReference type="KEGG" id="spx:SPG_1010"/>
<dbReference type="HOGENOM" id="CLU_073529_0_2_9"/>
<dbReference type="GO" id="GO:0046872">
    <property type="term" value="F:metal ion binding"/>
    <property type="evidence" value="ECO:0007669"/>
    <property type="project" value="UniProtKB-KW"/>
</dbReference>
<dbReference type="GO" id="GO:0008237">
    <property type="term" value="F:metallopeptidase activity"/>
    <property type="evidence" value="ECO:0007669"/>
    <property type="project" value="UniProtKB-KW"/>
</dbReference>
<dbReference type="GO" id="GO:0006508">
    <property type="term" value="P:proteolysis"/>
    <property type="evidence" value="ECO:0007669"/>
    <property type="project" value="UniProtKB-KW"/>
</dbReference>
<dbReference type="CDD" id="cd08071">
    <property type="entry name" value="MPN_DUF2466"/>
    <property type="match status" value="1"/>
</dbReference>
<dbReference type="Gene3D" id="3.40.140.10">
    <property type="entry name" value="Cytidine Deaminase, domain 2"/>
    <property type="match status" value="1"/>
</dbReference>
<dbReference type="InterPro" id="IPR037518">
    <property type="entry name" value="MPN"/>
</dbReference>
<dbReference type="InterPro" id="IPR025657">
    <property type="entry name" value="RadC_JAB"/>
</dbReference>
<dbReference type="InterPro" id="IPR010994">
    <property type="entry name" value="RuvA_2-like"/>
</dbReference>
<dbReference type="InterPro" id="IPR001405">
    <property type="entry name" value="UPF0758"/>
</dbReference>
<dbReference type="InterPro" id="IPR020891">
    <property type="entry name" value="UPF0758_CS"/>
</dbReference>
<dbReference type="InterPro" id="IPR046778">
    <property type="entry name" value="UPF0758_N"/>
</dbReference>
<dbReference type="NCBIfam" id="NF000642">
    <property type="entry name" value="PRK00024.1"/>
    <property type="match status" value="1"/>
</dbReference>
<dbReference type="NCBIfam" id="TIGR00608">
    <property type="entry name" value="radc"/>
    <property type="match status" value="1"/>
</dbReference>
<dbReference type="PANTHER" id="PTHR30471">
    <property type="entry name" value="DNA REPAIR PROTEIN RADC"/>
    <property type="match status" value="1"/>
</dbReference>
<dbReference type="PANTHER" id="PTHR30471:SF3">
    <property type="entry name" value="UPF0758 PROTEIN YEES-RELATED"/>
    <property type="match status" value="1"/>
</dbReference>
<dbReference type="Pfam" id="PF04002">
    <property type="entry name" value="RadC"/>
    <property type="match status" value="1"/>
</dbReference>
<dbReference type="Pfam" id="PF20582">
    <property type="entry name" value="UPF0758_N"/>
    <property type="match status" value="1"/>
</dbReference>
<dbReference type="SUPFAM" id="SSF47781">
    <property type="entry name" value="RuvA domain 2-like"/>
    <property type="match status" value="1"/>
</dbReference>
<dbReference type="PROSITE" id="PS50249">
    <property type="entry name" value="MPN"/>
    <property type="match status" value="1"/>
</dbReference>
<dbReference type="PROSITE" id="PS01302">
    <property type="entry name" value="UPF0758"/>
    <property type="match status" value="1"/>
</dbReference>
<reference key="1">
    <citation type="journal article" date="2001" name="Microb. Drug Resist.">
        <title>Annotated draft genomic sequence from a Streptococcus pneumoniae type 19F clinical isolate.</title>
        <authorList>
            <person name="Dopazo J."/>
            <person name="Mendoza A."/>
            <person name="Herrero J."/>
            <person name="Caldara F."/>
            <person name="Humbert Y."/>
            <person name="Friedli L."/>
            <person name="Guerrier M."/>
            <person name="Grand-Schenk E."/>
            <person name="Gandin C."/>
            <person name="de Francesco M."/>
            <person name="Polissi A."/>
            <person name="Buell G."/>
            <person name="Feger G."/>
            <person name="Garcia E."/>
            <person name="Peitsch M."/>
            <person name="Garcia-Bustos J.F."/>
        </authorList>
    </citation>
    <scope>NUCLEOTIDE SEQUENCE [LARGE SCALE GENOMIC DNA]</scope>
    <source>
        <strain>G54</strain>
    </source>
</reference>
<reference key="2">
    <citation type="submission" date="2008-03" db="EMBL/GenBank/DDBJ databases">
        <title>Pneumococcal beta glucoside metabolism investigated by whole genome comparison.</title>
        <authorList>
            <person name="Mulas L."/>
            <person name="Trappetti C."/>
            <person name="Hakenbeck R."/>
            <person name="Iannelli F."/>
            <person name="Pozzi G."/>
            <person name="Davidsen T.M."/>
            <person name="Tettelin H."/>
            <person name="Oggioni M."/>
        </authorList>
    </citation>
    <scope>NUCLEOTIDE SEQUENCE [LARGE SCALE GENOMIC DNA]</scope>
    <source>
        <strain>G54</strain>
    </source>
</reference>
<protein>
    <recommendedName>
        <fullName>UPF0758 protein SPG_1010</fullName>
    </recommendedName>
</protein>
<evidence type="ECO:0000255" key="1">
    <source>
        <dbReference type="PROSITE-ProRule" id="PRU01182"/>
    </source>
</evidence>
<evidence type="ECO:0000305" key="2"/>
<accession>B5E4K3</accession>
<keyword id="KW-0378">Hydrolase</keyword>
<keyword id="KW-0479">Metal-binding</keyword>
<keyword id="KW-0482">Metalloprotease</keyword>
<keyword id="KW-0645">Protease</keyword>
<keyword id="KW-0862">Zinc</keyword>
<feature type="chain" id="PRO_1000089857" description="UPF0758 protein SPG_1010">
    <location>
        <begin position="1"/>
        <end position="226"/>
    </location>
</feature>
<feature type="domain" description="MPN" evidence="1">
    <location>
        <begin position="103"/>
        <end position="225"/>
    </location>
</feature>
<feature type="short sequence motif" description="JAMM motif" evidence="1">
    <location>
        <begin position="174"/>
        <end position="187"/>
    </location>
</feature>
<feature type="binding site" evidence="1">
    <location>
        <position position="174"/>
    </location>
    <ligand>
        <name>Zn(2+)</name>
        <dbReference type="ChEBI" id="CHEBI:29105"/>
        <note>catalytic</note>
    </ligand>
</feature>
<feature type="binding site" evidence="1">
    <location>
        <position position="176"/>
    </location>
    <ligand>
        <name>Zn(2+)</name>
        <dbReference type="ChEBI" id="CHEBI:29105"/>
        <note>catalytic</note>
    </ligand>
</feature>
<feature type="binding site" evidence="1">
    <location>
        <position position="187"/>
    </location>
    <ligand>
        <name>Zn(2+)</name>
        <dbReference type="ChEBI" id="CHEBI:29105"/>
        <note>catalytic</note>
    </ligand>
</feature>
<organism>
    <name type="scientific">Streptococcus pneumoniae serotype 19F (strain G54)</name>
    <dbReference type="NCBI Taxonomy" id="512566"/>
    <lineage>
        <taxon>Bacteria</taxon>
        <taxon>Bacillati</taxon>
        <taxon>Bacillota</taxon>
        <taxon>Bacilli</taxon>
        <taxon>Lactobacillales</taxon>
        <taxon>Streptococcaceae</taxon>
        <taxon>Streptococcus</taxon>
    </lineage>
</organism>
<comment type="similarity">
    <text evidence="2">Belongs to the UPF0758 family.</text>
</comment>
<name>Y1010_STRP4</name>
<sequence length="226" mass="25536">MYSISFQEDSLLPRERLAKEGVEALSNQELLAILLRTGTRQASVFEIAQKVLNNLSSLTDLKKMTLQELQSLSGIGRVKAIELQAMIELGHRIHKHETLEMESILSSQKLAKKMQQELGDKKQEHLVALYLNTQNQIIHQQTIFIGSVTRSIAEPREILHYAIKHMATSLILVHNHPSGAVAPSQNDDHVTKLVKEACELMGIVLLDHLIVSHSNYFSYREKTDLI</sequence>